<gene>
    <name evidence="1" type="primary">fabH</name>
    <name type="ordered locus">SCH_1141</name>
</gene>
<comment type="function">
    <text evidence="1">Catalyzes the condensation reaction of fatty acid synthesis by the addition to an acyl acceptor of two carbons from malonyl-ACP. Catalyzes the first condensation reaction which initiates fatty acid synthesis and may therefore play a role in governing the total rate of fatty acid production. Possesses both acetoacetyl-ACP synthase and acetyl transacylase activities. Its substrate specificity determines the biosynthesis of branched-chain and/or straight-chain of fatty acids.</text>
</comment>
<comment type="catalytic activity">
    <reaction evidence="1">
        <text>malonyl-[ACP] + acetyl-CoA + H(+) = 3-oxobutanoyl-[ACP] + CO2 + CoA</text>
        <dbReference type="Rhea" id="RHEA:12080"/>
        <dbReference type="Rhea" id="RHEA-COMP:9623"/>
        <dbReference type="Rhea" id="RHEA-COMP:9625"/>
        <dbReference type="ChEBI" id="CHEBI:15378"/>
        <dbReference type="ChEBI" id="CHEBI:16526"/>
        <dbReference type="ChEBI" id="CHEBI:57287"/>
        <dbReference type="ChEBI" id="CHEBI:57288"/>
        <dbReference type="ChEBI" id="CHEBI:78449"/>
        <dbReference type="ChEBI" id="CHEBI:78450"/>
        <dbReference type="EC" id="2.3.1.180"/>
    </reaction>
</comment>
<comment type="pathway">
    <text evidence="1">Lipid metabolism; fatty acid biosynthesis.</text>
</comment>
<comment type="subunit">
    <text evidence="1">Homodimer.</text>
</comment>
<comment type="subcellular location">
    <subcellularLocation>
        <location evidence="1">Cytoplasm</location>
    </subcellularLocation>
</comment>
<comment type="domain">
    <text evidence="1">The last Arg residue of the ACP-binding site is essential for the weak association between ACP/AcpP and FabH.</text>
</comment>
<comment type="similarity">
    <text evidence="1">Belongs to the thiolase-like superfamily. FabH family.</text>
</comment>
<feature type="chain" id="PRO_1000056404" description="Beta-ketoacyl-[acyl-carrier-protein] synthase III">
    <location>
        <begin position="1"/>
        <end position="317"/>
    </location>
</feature>
<feature type="region of interest" description="ACP-binding" evidence="1">
    <location>
        <begin position="245"/>
        <end position="249"/>
    </location>
</feature>
<feature type="active site" evidence="1">
    <location>
        <position position="112"/>
    </location>
</feature>
<feature type="active site" evidence="1">
    <location>
        <position position="244"/>
    </location>
</feature>
<feature type="active site" evidence="1">
    <location>
        <position position="274"/>
    </location>
</feature>
<dbReference type="EC" id="2.3.1.180" evidence="1"/>
<dbReference type="EMBL" id="AE017220">
    <property type="protein sequence ID" value="AAX65047.1"/>
    <property type="molecule type" value="Genomic_DNA"/>
</dbReference>
<dbReference type="RefSeq" id="WP_000288148.1">
    <property type="nucleotide sequence ID" value="NC_006905.1"/>
</dbReference>
<dbReference type="SMR" id="Q57QG4"/>
<dbReference type="KEGG" id="sec:SCH_1141"/>
<dbReference type="HOGENOM" id="CLU_039592_3_1_6"/>
<dbReference type="UniPathway" id="UPA00094"/>
<dbReference type="Proteomes" id="UP000000538">
    <property type="component" value="Chromosome"/>
</dbReference>
<dbReference type="GO" id="GO:0005737">
    <property type="term" value="C:cytoplasm"/>
    <property type="evidence" value="ECO:0007669"/>
    <property type="project" value="UniProtKB-SubCell"/>
</dbReference>
<dbReference type="GO" id="GO:0004315">
    <property type="term" value="F:3-oxoacyl-[acyl-carrier-protein] synthase activity"/>
    <property type="evidence" value="ECO:0007669"/>
    <property type="project" value="InterPro"/>
</dbReference>
<dbReference type="GO" id="GO:0033818">
    <property type="term" value="F:beta-ketoacyl-acyl-carrier-protein synthase III activity"/>
    <property type="evidence" value="ECO:0007669"/>
    <property type="project" value="UniProtKB-UniRule"/>
</dbReference>
<dbReference type="GO" id="GO:0006633">
    <property type="term" value="P:fatty acid biosynthetic process"/>
    <property type="evidence" value="ECO:0007669"/>
    <property type="project" value="UniProtKB-UniRule"/>
</dbReference>
<dbReference type="CDD" id="cd00830">
    <property type="entry name" value="KAS_III"/>
    <property type="match status" value="1"/>
</dbReference>
<dbReference type="FunFam" id="3.40.47.10:FF:000004">
    <property type="entry name" value="3-oxoacyl-[acyl-carrier-protein] synthase 3"/>
    <property type="match status" value="1"/>
</dbReference>
<dbReference type="Gene3D" id="3.40.47.10">
    <property type="match status" value="1"/>
</dbReference>
<dbReference type="HAMAP" id="MF_01815">
    <property type="entry name" value="FabH"/>
    <property type="match status" value="1"/>
</dbReference>
<dbReference type="InterPro" id="IPR013747">
    <property type="entry name" value="ACP_syn_III_C"/>
</dbReference>
<dbReference type="InterPro" id="IPR013751">
    <property type="entry name" value="ACP_syn_III_N"/>
</dbReference>
<dbReference type="InterPro" id="IPR004655">
    <property type="entry name" value="FabH"/>
</dbReference>
<dbReference type="InterPro" id="IPR016039">
    <property type="entry name" value="Thiolase-like"/>
</dbReference>
<dbReference type="NCBIfam" id="TIGR00747">
    <property type="entry name" value="fabH"/>
    <property type="match status" value="1"/>
</dbReference>
<dbReference type="NCBIfam" id="NF006829">
    <property type="entry name" value="PRK09352.1"/>
    <property type="match status" value="1"/>
</dbReference>
<dbReference type="PANTHER" id="PTHR43091">
    <property type="entry name" value="3-OXOACYL-[ACYL-CARRIER-PROTEIN] SYNTHASE"/>
    <property type="match status" value="1"/>
</dbReference>
<dbReference type="PANTHER" id="PTHR43091:SF1">
    <property type="entry name" value="BETA-KETOACYL-[ACYL-CARRIER-PROTEIN] SYNTHASE III, CHLOROPLASTIC"/>
    <property type="match status" value="1"/>
</dbReference>
<dbReference type="Pfam" id="PF08545">
    <property type="entry name" value="ACP_syn_III"/>
    <property type="match status" value="1"/>
</dbReference>
<dbReference type="Pfam" id="PF08541">
    <property type="entry name" value="ACP_syn_III_C"/>
    <property type="match status" value="1"/>
</dbReference>
<dbReference type="SUPFAM" id="SSF53901">
    <property type="entry name" value="Thiolase-like"/>
    <property type="match status" value="1"/>
</dbReference>
<organism>
    <name type="scientific">Salmonella choleraesuis (strain SC-B67)</name>
    <dbReference type="NCBI Taxonomy" id="321314"/>
    <lineage>
        <taxon>Bacteria</taxon>
        <taxon>Pseudomonadati</taxon>
        <taxon>Pseudomonadota</taxon>
        <taxon>Gammaproteobacteria</taxon>
        <taxon>Enterobacterales</taxon>
        <taxon>Enterobacteriaceae</taxon>
        <taxon>Salmonella</taxon>
    </lineage>
</organism>
<protein>
    <recommendedName>
        <fullName evidence="1">Beta-ketoacyl-[acyl-carrier-protein] synthase III</fullName>
        <shortName evidence="1">Beta-ketoacyl-ACP synthase III</shortName>
        <shortName evidence="1">KAS III</shortName>
        <ecNumber evidence="1">2.3.1.180</ecNumber>
    </recommendedName>
    <alternativeName>
        <fullName evidence="1">3-oxoacyl-[acyl-carrier-protein] synthase 3</fullName>
    </alternativeName>
    <alternativeName>
        <fullName evidence="1">3-oxoacyl-[acyl-carrier-protein] synthase III</fullName>
    </alternativeName>
</protein>
<sequence length="317" mass="33524">MYTKIIGTGSYLPEQVRTNADLEKMVETSDEWIVTRTGIRERHIAAPNETVATMGFTAANRAIEMAGIDKDQIGLIVVATTSATHAFPSAACQIQSMLGIKGCPAFDVAAACAGFTYALSIADQYVKSGAVKHALVVGSDVLARTCDPGDRGTIIIFGDGAGAAVLSASEEPGIISTHLHADGRYGELLTLPNADRVNPDNPIYLTMAGNEVFKVAVTELAHIVDETLAANNLDRSELDWLVPHQANLRIISATAKKLGMSMDNVVVTLDRHGNTSAASVPCALDEAVRDGRIKAGQLVLLEAFGGGFTWGSALIRF</sequence>
<proteinExistence type="inferred from homology"/>
<reference key="1">
    <citation type="journal article" date="2005" name="Nucleic Acids Res.">
        <title>The genome sequence of Salmonella enterica serovar Choleraesuis, a highly invasive and resistant zoonotic pathogen.</title>
        <authorList>
            <person name="Chiu C.-H."/>
            <person name="Tang P."/>
            <person name="Chu C."/>
            <person name="Hu S."/>
            <person name="Bao Q."/>
            <person name="Yu J."/>
            <person name="Chou Y.-Y."/>
            <person name="Wang H.-S."/>
            <person name="Lee Y.-S."/>
        </authorList>
    </citation>
    <scope>NUCLEOTIDE SEQUENCE [LARGE SCALE GENOMIC DNA]</scope>
    <source>
        <strain>SC-B67</strain>
    </source>
</reference>
<accession>Q57QG4</accession>
<evidence type="ECO:0000255" key="1">
    <source>
        <dbReference type="HAMAP-Rule" id="MF_01815"/>
    </source>
</evidence>
<keyword id="KW-0012">Acyltransferase</keyword>
<keyword id="KW-0963">Cytoplasm</keyword>
<keyword id="KW-0275">Fatty acid biosynthesis</keyword>
<keyword id="KW-0276">Fatty acid metabolism</keyword>
<keyword id="KW-0444">Lipid biosynthesis</keyword>
<keyword id="KW-0443">Lipid metabolism</keyword>
<keyword id="KW-0511">Multifunctional enzyme</keyword>
<keyword id="KW-0808">Transferase</keyword>
<name>FABH_SALCH</name>